<feature type="signal peptide" evidence="2">
    <location>
        <begin position="1"/>
        <end position="26"/>
    </location>
</feature>
<feature type="chain" id="PRO_0000351326" description="Autoinducer 2-binding protein LsrB">
    <location>
        <begin position="27"/>
        <end position="340"/>
    </location>
</feature>
<protein>
    <recommendedName>
        <fullName>Autoinducer 2-binding protein LsrB</fullName>
        <shortName>AI-2-binding protein LsrB</shortName>
    </recommendedName>
</protein>
<evidence type="ECO:0000250" key="1"/>
<evidence type="ECO:0000255" key="2"/>
<evidence type="ECO:0000305" key="3"/>
<proteinExistence type="inferred from homology"/>
<reference key="1">
    <citation type="journal article" date="2005" name="Nucleic Acids Res.">
        <title>The genome sequence of Salmonella enterica serovar Choleraesuis, a highly invasive and resistant zoonotic pathogen.</title>
        <authorList>
            <person name="Chiu C.-H."/>
            <person name="Tang P."/>
            <person name="Chu C."/>
            <person name="Hu S."/>
            <person name="Bao Q."/>
            <person name="Yu J."/>
            <person name="Chou Y.-Y."/>
            <person name="Wang H.-S."/>
            <person name="Lee Y.-S."/>
        </authorList>
    </citation>
    <scope>NUCLEOTIDE SEQUENCE [LARGE SCALE GENOMIC DNA]</scope>
    <source>
        <strain>SC-B67</strain>
    </source>
</reference>
<organism>
    <name type="scientific">Salmonella choleraesuis (strain SC-B67)</name>
    <dbReference type="NCBI Taxonomy" id="321314"/>
    <lineage>
        <taxon>Bacteria</taxon>
        <taxon>Pseudomonadati</taxon>
        <taxon>Pseudomonadota</taxon>
        <taxon>Gammaproteobacteria</taxon>
        <taxon>Enterobacterales</taxon>
        <taxon>Enterobacteriaceae</taxon>
        <taxon>Salmonella</taxon>
    </lineage>
</organism>
<sequence>MARHSIKMIALLTAFGLASAAMTVQAAERIAFIPKLVGVGFFTSGGNGAQEAGKALGIDVTYDGPTEPSVSGQVQLVNNFVNQGYDAIIVSAVSPDGLCPALKRAMQRGVKILTWDSDTKPECRSYYINQGTPKQLGSMLVEMAAHQVDKEKAKVAFFYSSPTVTDQNQWVKEAKAKISKEHPGWEIVTTQFGYNDATKSLQTAEGIIKAYPDLDAIIAPDANALPAAAQAAENLKRNNLAIVGFSTPNVMRPYVQRGTVKEFGLWDVVQQGKISVYVANELLKNMPMNVGDSLDIPGIGKVTVSPNSEQGYHYEAKGNGIVLLPERVIFNKDNIDKYDF</sequence>
<name>LSRB_SALCH</name>
<comment type="function">
    <text evidence="1">Part of the ABC transporter complex LsrABCD involved in autoinducer 2 (AI-2) import. Binds AI-2 and delivers it to the LsrC and LsrD permeases (By similarity).</text>
</comment>
<comment type="subunit">
    <text evidence="1">The complex is composed of two ATP-binding proteins (LsrA), two transmembrane proteins (LsrC and LsrD) and a solute-binding protein (LsrB).</text>
</comment>
<comment type="subcellular location">
    <subcellularLocation>
        <location evidence="3">Periplasm</location>
    </subcellularLocation>
</comment>
<comment type="similarity">
    <text evidence="3">Belongs to the bacterial solute-binding protein 2 family.</text>
</comment>
<accession>Q57HE0</accession>
<keyword id="KW-0574">Periplasm</keyword>
<keyword id="KW-0732">Signal</keyword>
<gene>
    <name type="primary">lsrB</name>
    <name type="ordered locus">SCH_3966</name>
</gene>
<dbReference type="EMBL" id="AE017220">
    <property type="protein sequence ID" value="AAX67872.1"/>
    <property type="molecule type" value="Genomic_DNA"/>
</dbReference>
<dbReference type="RefSeq" id="WP_011264437.1">
    <property type="nucleotide sequence ID" value="NC_006905.1"/>
</dbReference>
<dbReference type="SMR" id="Q57HE0"/>
<dbReference type="KEGG" id="sec:SCH_3966"/>
<dbReference type="HOGENOM" id="CLU_037628_3_0_6"/>
<dbReference type="Proteomes" id="UP000000538">
    <property type="component" value="Chromosome"/>
</dbReference>
<dbReference type="GO" id="GO:0043190">
    <property type="term" value="C:ATP-binding cassette (ABC) transporter complex"/>
    <property type="evidence" value="ECO:0007669"/>
    <property type="project" value="InterPro"/>
</dbReference>
<dbReference type="GO" id="GO:0030288">
    <property type="term" value="C:outer membrane-bounded periplasmic space"/>
    <property type="evidence" value="ECO:0007669"/>
    <property type="project" value="TreeGrafter"/>
</dbReference>
<dbReference type="GO" id="GO:0030246">
    <property type="term" value="F:carbohydrate binding"/>
    <property type="evidence" value="ECO:0007669"/>
    <property type="project" value="TreeGrafter"/>
</dbReference>
<dbReference type="CDD" id="cd20003">
    <property type="entry name" value="PBP1_LsrB_Quorum_Sensing"/>
    <property type="match status" value="1"/>
</dbReference>
<dbReference type="Gene3D" id="3.40.50.2300">
    <property type="match status" value="2"/>
</dbReference>
<dbReference type="InterPro" id="IPR050555">
    <property type="entry name" value="Bact_Solute-Bind_Prot2"/>
</dbReference>
<dbReference type="InterPro" id="IPR030159">
    <property type="entry name" value="LsrB"/>
</dbReference>
<dbReference type="InterPro" id="IPR028082">
    <property type="entry name" value="Peripla_BP_I"/>
</dbReference>
<dbReference type="InterPro" id="IPR025997">
    <property type="entry name" value="SBP_2_dom"/>
</dbReference>
<dbReference type="NCBIfam" id="NF011937">
    <property type="entry name" value="PRK15408.1"/>
    <property type="match status" value="1"/>
</dbReference>
<dbReference type="PANTHER" id="PTHR30036:SF7">
    <property type="entry name" value="ABC TRANSPORTER PERIPLASMIC-BINDING PROTEIN YPHF"/>
    <property type="match status" value="1"/>
</dbReference>
<dbReference type="PANTHER" id="PTHR30036">
    <property type="entry name" value="D-XYLOSE-BINDING PERIPLASMIC PROTEIN"/>
    <property type="match status" value="1"/>
</dbReference>
<dbReference type="Pfam" id="PF13407">
    <property type="entry name" value="Peripla_BP_4"/>
    <property type="match status" value="1"/>
</dbReference>
<dbReference type="SUPFAM" id="SSF53822">
    <property type="entry name" value="Periplasmic binding protein-like I"/>
    <property type="match status" value="1"/>
</dbReference>